<dbReference type="EC" id="1.14.14.17" evidence="1"/>
<dbReference type="EMBL" id="HG970334">
    <property type="protein sequence ID" value="CEF87525.1"/>
    <property type="molecule type" value="Genomic_DNA"/>
</dbReference>
<dbReference type="RefSeq" id="XP_011324860.1">
    <property type="nucleotide sequence ID" value="XM_011326558.1"/>
</dbReference>
<dbReference type="SMR" id="I1RQ76"/>
<dbReference type="FunCoup" id="I1RQ76">
    <property type="interactions" value="192"/>
</dbReference>
<dbReference type="STRING" id="229533.I1RQ76"/>
<dbReference type="KEGG" id="fgr:FGSG_06215"/>
<dbReference type="VEuPathDB" id="FungiDB:FGRAMPH1_01G19781"/>
<dbReference type="eggNOG" id="KOG1298">
    <property type="taxonomic scope" value="Eukaryota"/>
</dbReference>
<dbReference type="HOGENOM" id="CLU_026390_0_0_1"/>
<dbReference type="InParanoid" id="I1RQ76"/>
<dbReference type="OrthoDB" id="39478at110618"/>
<dbReference type="UniPathway" id="UPA00767">
    <property type="reaction ID" value="UER00752"/>
</dbReference>
<dbReference type="UniPathway" id="UPA00768"/>
<dbReference type="Proteomes" id="UP000070720">
    <property type="component" value="Chromosome 3"/>
</dbReference>
<dbReference type="GO" id="GO:0005789">
    <property type="term" value="C:endoplasmic reticulum membrane"/>
    <property type="evidence" value="ECO:0007669"/>
    <property type="project" value="UniProtKB-SubCell"/>
</dbReference>
<dbReference type="GO" id="GO:0005811">
    <property type="term" value="C:lipid droplet"/>
    <property type="evidence" value="ECO:0007669"/>
    <property type="project" value="UniProtKB-SubCell"/>
</dbReference>
<dbReference type="GO" id="GO:0050660">
    <property type="term" value="F:flavin adenine dinucleotide binding"/>
    <property type="evidence" value="ECO:0007669"/>
    <property type="project" value="InterPro"/>
</dbReference>
<dbReference type="GO" id="GO:0004506">
    <property type="term" value="F:squalene monooxygenase activity"/>
    <property type="evidence" value="ECO:0007669"/>
    <property type="project" value="UniProtKB-EC"/>
</dbReference>
<dbReference type="GO" id="GO:0006696">
    <property type="term" value="P:ergosterol biosynthetic process"/>
    <property type="evidence" value="ECO:0007669"/>
    <property type="project" value="TreeGrafter"/>
</dbReference>
<dbReference type="FunFam" id="3.50.50.60:FF:000166">
    <property type="entry name" value="Squalene monooxygenase Erg1"/>
    <property type="match status" value="1"/>
</dbReference>
<dbReference type="Gene3D" id="3.50.50.60">
    <property type="entry name" value="FAD/NAD(P)-binding domain"/>
    <property type="match status" value="1"/>
</dbReference>
<dbReference type="InterPro" id="IPR006076">
    <property type="entry name" value="FAD-dep_OxRdtase"/>
</dbReference>
<dbReference type="InterPro" id="IPR036188">
    <property type="entry name" value="FAD/NAD-bd_sf"/>
</dbReference>
<dbReference type="InterPro" id="IPR013698">
    <property type="entry name" value="Squalene_epoxidase"/>
</dbReference>
<dbReference type="InterPro" id="IPR040125">
    <property type="entry name" value="Squalene_monox"/>
</dbReference>
<dbReference type="PANTHER" id="PTHR10835">
    <property type="entry name" value="SQUALENE MONOOXYGENASE"/>
    <property type="match status" value="1"/>
</dbReference>
<dbReference type="PANTHER" id="PTHR10835:SF0">
    <property type="entry name" value="SQUALENE MONOOXYGENASE"/>
    <property type="match status" value="1"/>
</dbReference>
<dbReference type="Pfam" id="PF01266">
    <property type="entry name" value="DAO"/>
    <property type="match status" value="1"/>
</dbReference>
<dbReference type="Pfam" id="PF08491">
    <property type="entry name" value="SE"/>
    <property type="match status" value="1"/>
</dbReference>
<dbReference type="PRINTS" id="PR00420">
    <property type="entry name" value="RNGMNOXGNASE"/>
</dbReference>
<dbReference type="SUPFAM" id="SSF51905">
    <property type="entry name" value="FAD/NAD(P)-binding domain"/>
    <property type="match status" value="1"/>
</dbReference>
<proteinExistence type="evidence at transcript level"/>
<evidence type="ECO:0000250" key="1">
    <source>
        <dbReference type="UniProtKB" id="P32476"/>
    </source>
</evidence>
<evidence type="ECO:0000250" key="2">
    <source>
        <dbReference type="UniProtKB" id="Q14534"/>
    </source>
</evidence>
<evidence type="ECO:0000255" key="3"/>
<evidence type="ECO:0000269" key="4">
    <source>
    </source>
</evidence>
<evidence type="ECO:0000303" key="5">
    <source>
    </source>
</evidence>
<evidence type="ECO:0000305" key="6"/>
<evidence type="ECO:0000305" key="7">
    <source>
    </source>
</evidence>
<protein>
    <recommendedName>
        <fullName evidence="5">Squalene epoxidase ERG1</fullName>
        <shortName evidence="1">SE</shortName>
        <ecNumber evidence="1">1.14.14.17</ecNumber>
    </recommendedName>
    <alternativeName>
        <fullName evidence="1">Ergosterol biosynthetic protein 1</fullName>
    </alternativeName>
    <alternativeName>
        <fullName evidence="1">Squalene monooxygenase ERG1</fullName>
    </alternativeName>
</protein>
<accession>I1RQ76</accession>
<reference key="1">
    <citation type="journal article" date="2007" name="Science">
        <title>The Fusarium graminearum genome reveals a link between localized polymorphism and pathogen specialization.</title>
        <authorList>
            <person name="Cuomo C.A."/>
            <person name="Gueldener U."/>
            <person name="Xu J.-R."/>
            <person name="Trail F."/>
            <person name="Turgeon B.G."/>
            <person name="Di Pietro A."/>
            <person name="Walton J.D."/>
            <person name="Ma L.-J."/>
            <person name="Baker S.E."/>
            <person name="Rep M."/>
            <person name="Adam G."/>
            <person name="Antoniw J."/>
            <person name="Baldwin T."/>
            <person name="Calvo S.E."/>
            <person name="Chang Y.-L."/>
            <person name="DeCaprio D."/>
            <person name="Gale L.R."/>
            <person name="Gnerre S."/>
            <person name="Goswami R.S."/>
            <person name="Hammond-Kosack K."/>
            <person name="Harris L.J."/>
            <person name="Hilburn K."/>
            <person name="Kennell J.C."/>
            <person name="Kroken S."/>
            <person name="Magnuson J.K."/>
            <person name="Mannhaupt G."/>
            <person name="Mauceli E.W."/>
            <person name="Mewes H.-W."/>
            <person name="Mitterbauer R."/>
            <person name="Muehlbauer G."/>
            <person name="Muensterkoetter M."/>
            <person name="Nelson D."/>
            <person name="O'Donnell K."/>
            <person name="Ouellet T."/>
            <person name="Qi W."/>
            <person name="Quesneville H."/>
            <person name="Roncero M.I.G."/>
            <person name="Seong K.-Y."/>
            <person name="Tetko I.V."/>
            <person name="Urban M."/>
            <person name="Waalwijk C."/>
            <person name="Ward T.J."/>
            <person name="Yao J."/>
            <person name="Birren B.W."/>
            <person name="Kistler H.C."/>
        </authorList>
    </citation>
    <scope>NUCLEOTIDE SEQUENCE [LARGE SCALE GENOMIC DNA]</scope>
    <source>
        <strain>ATCC MYA-4620 / CBS 123657 / FGSC 9075 / NRRL 31084 / PH-1</strain>
    </source>
</reference>
<reference key="2">
    <citation type="journal article" date="2010" name="Nature">
        <title>Comparative genomics reveals mobile pathogenicity chromosomes in Fusarium.</title>
        <authorList>
            <person name="Ma L.-J."/>
            <person name="van der Does H.C."/>
            <person name="Borkovich K.A."/>
            <person name="Coleman J.J."/>
            <person name="Daboussi M.-J."/>
            <person name="Di Pietro A."/>
            <person name="Dufresne M."/>
            <person name="Freitag M."/>
            <person name="Grabherr M."/>
            <person name="Henrissat B."/>
            <person name="Houterman P.M."/>
            <person name="Kang S."/>
            <person name="Shim W.-B."/>
            <person name="Woloshuk C."/>
            <person name="Xie X."/>
            <person name="Xu J.-R."/>
            <person name="Antoniw J."/>
            <person name="Baker S.E."/>
            <person name="Bluhm B.H."/>
            <person name="Breakspear A."/>
            <person name="Brown D.W."/>
            <person name="Butchko R.A.E."/>
            <person name="Chapman S."/>
            <person name="Coulson R."/>
            <person name="Coutinho P.M."/>
            <person name="Danchin E.G.J."/>
            <person name="Diener A."/>
            <person name="Gale L.R."/>
            <person name="Gardiner D.M."/>
            <person name="Goff S."/>
            <person name="Hammond-Kosack K.E."/>
            <person name="Hilburn K."/>
            <person name="Hua-Van A."/>
            <person name="Jonkers W."/>
            <person name="Kazan K."/>
            <person name="Kodira C.D."/>
            <person name="Koehrsen M."/>
            <person name="Kumar L."/>
            <person name="Lee Y.-H."/>
            <person name="Li L."/>
            <person name="Manners J.M."/>
            <person name="Miranda-Saavedra D."/>
            <person name="Mukherjee M."/>
            <person name="Park G."/>
            <person name="Park J."/>
            <person name="Park S.-Y."/>
            <person name="Proctor R.H."/>
            <person name="Regev A."/>
            <person name="Ruiz-Roldan M.C."/>
            <person name="Sain D."/>
            <person name="Sakthikumar S."/>
            <person name="Sykes S."/>
            <person name="Schwartz D.C."/>
            <person name="Turgeon B.G."/>
            <person name="Wapinski I."/>
            <person name="Yoder O."/>
            <person name="Young S."/>
            <person name="Zeng Q."/>
            <person name="Zhou S."/>
            <person name="Galagan J."/>
            <person name="Cuomo C.A."/>
            <person name="Kistler H.C."/>
            <person name="Rep M."/>
        </authorList>
    </citation>
    <scope>GENOME REANNOTATION</scope>
    <source>
        <strain>ATCC MYA-4620 / CBS 123657 / FGSC 9075 / NRRL 31084 / PH-1</strain>
    </source>
</reference>
<reference key="3">
    <citation type="journal article" date="2015" name="BMC Genomics">
        <title>The completed genome sequence of the pathogenic ascomycete fungus Fusarium graminearum.</title>
        <authorList>
            <person name="King R."/>
            <person name="Urban M."/>
            <person name="Hammond-Kosack M.C.U."/>
            <person name="Hassani-Pak K."/>
            <person name="Hammond-Kosack K.E."/>
        </authorList>
    </citation>
    <scope>NUCLEOTIDE SEQUENCE [LARGE SCALE GENOMIC DNA]</scope>
    <source>
        <strain>ATCC MYA-4620 / CBS 123657 / FGSC 9075 / NRRL 31084 / PH-1</strain>
    </source>
</reference>
<reference key="4">
    <citation type="journal article" date="2013" name="New Phytol.">
        <title>Characterization of the sterol 14alpha-demethylases of Fusarium graminearum identifies a novel genus-specific CYP51 function.</title>
        <authorList>
            <person name="Fan J."/>
            <person name="Urban M."/>
            <person name="Parker J.E."/>
            <person name="Brewer H.C."/>
            <person name="Kelly S.L."/>
            <person name="Hammond-Kosack K.E."/>
            <person name="Fraaije B.A."/>
            <person name="Liu X."/>
            <person name="Cools H.J."/>
        </authorList>
    </citation>
    <scope>FUNCTION</scope>
    <scope>INDUCTION</scope>
    <scope>PATHWAY</scope>
</reference>
<comment type="function">
    <text evidence="1 7">Squalene epoxidase; part of the third module of ergosterol biosynthesis pathway that includes the late steps of the pathway (By similarity). ERG1 catalyzes the epoxidation of squalene into 2,3-epoxysqualene (By similarity). The third module or late pathway involves the ergosterol synthesis itself through consecutive reactions that mainly occur in the endoplasmic reticulum (ER) membrane. Firstly, the squalene synthase ERG9 catalyzes the condensation of 2 farnesyl pyrophosphate moieties to form squalene, which is the precursor of all steroids. Squalene synthase is crucial for balancing the incorporation of farnesyl diphosphate (FPP) into sterol and nonsterol isoprene synthesis. Secondly, squalene is converted into lanosterol by the consecutive action of the squalene epoxidase ERG1 and the lanosterol synthase ERG7. Then, the delta(24)-sterol C-methyltransferase ERG6 methylates lanosterol at C-24 to produce eburicol. Eburicol is the substrate of the sterol 14-alpha demethylase encoded by CYP51A, CYP51B and CYP51C, to yield 4,4,24-trimethyl ergosta-8,14,24(28)-trienol. CYP51B encodes the enzyme primarily responsible for sterol 14-alpha-demethylation, and plays an essential role in ascospore formation. CYP51A encodes an additional sterol 14-alpha-demethylase, induced on ergosterol depletion and responsible for the intrinsic variation in azole sensitivity. The third CYP51 isoform, CYP51C, does not encode a sterol 14-alpha-demethylase, but is required for full virulence on host wheat ears. The C-14 reductase ERG24 then reduces the C14=C15 double bond which leads to 4,4-dimethylfecosterol. A sequence of further demethylations at C-4, involving the C-4 demethylation complex containing the C-4 methylsterol oxidases ERG25, the sterol-4-alpha-carboxylate 3-dehydrogenase ERG26 and the 3-keto-steroid reductase ERG27, leads to the production of fecosterol via 4-methylfecosterol. ERG28 has a role as a scaffold to help anchor ERG25, ERG26 and ERG27 to the endoplasmic reticulum. The C-8 sterol isomerase ERG2 then catalyzes the reaction which results in unsaturation at C-7 in the B ring of sterols and thus converts fecosterol to episterol. The sterol-C5-desaturases ERG3A and ERG3BB then catalyze the introduction of a C-5 double bond in the B ring to produce 5-dehydroepisterol. The C-22 sterol desaturases ERG5A and ERG5B further convert 5-dehydroepisterol into ergosta-5,7,22,24(28)-tetraen-3beta-ol by forming the C-22(23) double bond in the sterol side chain. Finally, ergosta-5,7,22,24(28)-tetraen-3beta-ol is substrate of the C-24(28) sterol reductase ERG4 to produce ergosterol (Probable).</text>
</comment>
<comment type="catalytic activity">
    <reaction evidence="1">
        <text>squalene + reduced [NADPH--hemoprotein reductase] + O2 = (S)-2,3-epoxysqualene + oxidized [NADPH--hemoprotein reductase] + H2O + H(+)</text>
        <dbReference type="Rhea" id="RHEA:25282"/>
        <dbReference type="Rhea" id="RHEA-COMP:11964"/>
        <dbReference type="Rhea" id="RHEA-COMP:11965"/>
        <dbReference type="ChEBI" id="CHEBI:15377"/>
        <dbReference type="ChEBI" id="CHEBI:15378"/>
        <dbReference type="ChEBI" id="CHEBI:15379"/>
        <dbReference type="ChEBI" id="CHEBI:15440"/>
        <dbReference type="ChEBI" id="CHEBI:15441"/>
        <dbReference type="ChEBI" id="CHEBI:57618"/>
        <dbReference type="ChEBI" id="CHEBI:58210"/>
        <dbReference type="EC" id="1.14.14.17"/>
    </reaction>
    <physiologicalReaction direction="left-to-right" evidence="1">
        <dbReference type="Rhea" id="RHEA:25283"/>
    </physiologicalReaction>
</comment>
<comment type="cofactor">
    <cofactor evidence="7">
        <name>FAD</name>
        <dbReference type="ChEBI" id="CHEBI:57692"/>
    </cofactor>
</comment>
<comment type="pathway">
    <text evidence="7">Terpene metabolism; lanosterol biosynthesis; lanosterol from farnesyl diphosphate: step 2/3.</text>
</comment>
<comment type="pathway">
    <text evidence="7">Steroid metabolism; ergosterol biosynthesis.</text>
</comment>
<comment type="subcellular location">
    <subcellularLocation>
        <location evidence="1">Microsome membrane</location>
        <topology evidence="3">Multi-pass membrane protein</topology>
    </subcellularLocation>
    <subcellularLocation>
        <location evidence="1">Endoplasmic reticulum membrane</location>
        <topology evidence="3">Multi-pass membrane protein</topology>
    </subcellularLocation>
    <subcellularLocation>
        <location evidence="1">Lipid droplet</location>
    </subcellularLocation>
</comment>
<comment type="induction">
    <text evidence="4">Expression is significantly lower when CYP51A or CYP51C are deleted.</text>
</comment>
<comment type="miscellaneous">
    <text evidence="4">In Fusarium, the biosynthesis pathway of the sterol precursors leading to the prevalent sterol ergosterol differs from yeast. The ringsystem of lanosterol in S.cerevisiae is firstly demethylised in three enzymatic steps leading to the intermediate zymosterol and secondly a methyl group is added to zymosterol by the sterol 24-C-methyltransferase to form fecosterol. In Fusarium, lanosterol is firstly transmethylated by the sterol 24-C-methyltransferase leading to the intermediate eburicol and secondly demethylated in three steps to form fecosterol.</text>
</comment>
<comment type="similarity">
    <text evidence="6">Belongs to the squalene monooxygenase family.</text>
</comment>
<gene>
    <name evidence="5" type="primary">ERG1</name>
    <name type="ORF">FG06215</name>
    <name type="ORF">FGRAMPH1_01T19781</name>
</gene>
<feature type="chain" id="PRO_0000454351" description="Squalene epoxidase ERG1">
    <location>
        <begin position="1"/>
        <end position="500"/>
    </location>
</feature>
<feature type="transmembrane region" description="Helical" evidence="3">
    <location>
        <begin position="20"/>
        <end position="40"/>
    </location>
</feature>
<feature type="transmembrane region" description="Helical" evidence="3">
    <location>
        <begin position="450"/>
        <end position="470"/>
    </location>
</feature>
<feature type="transmembrane region" description="Helical" evidence="3">
    <location>
        <begin position="474"/>
        <end position="494"/>
    </location>
</feature>
<feature type="binding site" evidence="2">
    <location>
        <begin position="30"/>
        <end position="31"/>
    </location>
    <ligand>
        <name>FAD</name>
        <dbReference type="ChEBI" id="CHEBI:57692"/>
    </ligand>
</feature>
<feature type="binding site" evidence="2">
    <location>
        <begin position="50"/>
        <end position="51"/>
    </location>
    <ligand>
        <name>FAD</name>
        <dbReference type="ChEBI" id="CHEBI:57692"/>
    </ligand>
</feature>
<feature type="binding site" evidence="2">
    <location>
        <position position="58"/>
    </location>
    <ligand>
        <name>FAD</name>
        <dbReference type="ChEBI" id="CHEBI:57692"/>
    </ligand>
</feature>
<feature type="binding site" evidence="2">
    <location>
        <position position="145"/>
    </location>
    <ligand>
        <name>FAD</name>
        <dbReference type="ChEBI" id="CHEBI:57692"/>
    </ligand>
</feature>
<feature type="binding site" evidence="2">
    <location>
        <position position="332"/>
    </location>
    <ligand>
        <name>FAD</name>
        <dbReference type="ChEBI" id="CHEBI:57692"/>
    </ligand>
</feature>
<feature type="binding site" evidence="2">
    <location>
        <position position="345"/>
    </location>
    <ligand>
        <name>FAD</name>
        <dbReference type="ChEBI" id="CHEBI:57692"/>
    </ligand>
</feature>
<feature type="site" description="Important for enzyme activity" evidence="2">
    <location>
        <position position="92"/>
    </location>
</feature>
<name>ERG1_GIBZE</name>
<organism>
    <name type="scientific">Gibberella zeae (strain ATCC MYA-4620 / CBS 123657 / FGSC 9075 / NRRL 31084 / PH-1)</name>
    <name type="common">Wheat head blight fungus</name>
    <name type="synonym">Fusarium graminearum</name>
    <dbReference type="NCBI Taxonomy" id="229533"/>
    <lineage>
        <taxon>Eukaryota</taxon>
        <taxon>Fungi</taxon>
        <taxon>Dikarya</taxon>
        <taxon>Ascomycota</taxon>
        <taxon>Pezizomycotina</taxon>
        <taxon>Sordariomycetes</taxon>
        <taxon>Hypocreomycetidae</taxon>
        <taxon>Hypocreales</taxon>
        <taxon>Nectriaceae</taxon>
        <taxon>Fusarium</taxon>
    </lineage>
</organism>
<keyword id="KW-0256">Endoplasmic reticulum</keyword>
<keyword id="KW-0274">FAD</keyword>
<keyword id="KW-0285">Flavoprotein</keyword>
<keyword id="KW-0444">Lipid biosynthesis</keyword>
<keyword id="KW-0551">Lipid droplet</keyword>
<keyword id="KW-0443">Lipid metabolism</keyword>
<keyword id="KW-0472">Membrane</keyword>
<keyword id="KW-0492">Microsome</keyword>
<keyword id="KW-0560">Oxidoreductase</keyword>
<keyword id="KW-1185">Reference proteome</keyword>
<keyword id="KW-0752">Steroid biosynthesis</keyword>
<keyword id="KW-0753">Steroid metabolism</keyword>
<keyword id="KW-0756">Sterol biosynthesis</keyword>
<keyword id="KW-1207">Sterol metabolism</keyword>
<keyword id="KW-0812">Transmembrane</keyword>
<keyword id="KW-1133">Transmembrane helix</keyword>
<sequence length="500" mass="55157">MASILTTTEAQTRRREQYHEADVVVVGAGVFGCTMAFALANQGRSVLLLERWLKEPDRIVGELLQPGGVASLQKLGLGHCVEGIDAKPCYGYTIFYHGEKVLVPYPGIDDEGSPTHAWGGHSTGDRSTRPSGCSFHHGRFINKLRESCIAHKNITVVETEVVKTLRGEVSDQILGVESRTMNKETGKKEQDYYFGQLTIIADGYDSKWRQEVLKTKPKVCSKFYALELIDCDLPQPGHGHVIIGNAFPILLYQIGTHETRALIDVPQGIPEASPENGGVRGYIRNFVLPALPPSIRPSAEKALEDGKIPRSMPNSWLPPTKQRANGAILLGDAMNMRHPLTGGGMTVAFNDVVILSELLHPDKVGDLGDSKLINNALEELYWRRKPLTGIINVLAQALYSLFAANDRQLRALQYGCFTYFKNGDTDGPVALLAGILQRPFILAYHFFSVAFLAIWLNACSVVGCGILGIFKFPLAIIDAVLILWKACIVFIPIMWRESFQ</sequence>